<reference key="1">
    <citation type="journal article" date="2006" name="J. Bacteriol.">
        <title>The Methanosarcina barkeri genome: comparative analysis with Methanosarcina acetivorans and Methanosarcina mazei reveals extensive rearrangement within methanosarcinal genomes.</title>
        <authorList>
            <person name="Maeder D.L."/>
            <person name="Anderson I."/>
            <person name="Brettin T.S."/>
            <person name="Bruce D.C."/>
            <person name="Gilna P."/>
            <person name="Han C.S."/>
            <person name="Lapidus A."/>
            <person name="Metcalf W.W."/>
            <person name="Saunders E."/>
            <person name="Tapia R."/>
            <person name="Sowers K.R."/>
        </authorList>
    </citation>
    <scope>NUCLEOTIDE SEQUENCE [LARGE SCALE GENOMIC DNA]</scope>
    <source>
        <strain>Fusaro / DSM 804</strain>
    </source>
</reference>
<sequence length="287" mass="32359">MYSIYSGGFSLVRSLLKKYNIKGGTFDQHFLVDAGYLDRIVAAAELGPKDVVLEIGAGVGNLTERLAKKVKKVIAIELDPVLVRVLHDRFDKVGNIEIIAGDALKVEFPEFDKIVSNLPYSISSEITFKLLRHKFKLGILMYQYEFAARMVSQPNCKDYSRLTVDTCYFADASILMKVPKSAFQPAPEVDSAVIKLVPRPVPFEVKDQAFFMNFVSAVFSQRRKKLRNAILNTNYLLKIPNIKEVISRLPEDMMSKRAENLTPEELAQVANHIIDLKTSILANELNE</sequence>
<evidence type="ECO:0000255" key="1">
    <source>
        <dbReference type="HAMAP-Rule" id="MF_00607"/>
    </source>
</evidence>
<comment type="function">
    <text evidence="1">Specifically dimethylates two adjacent adenosines in the loop of a conserved hairpin near the 3'-end of 16S rRNA in the 30S particle. May play a critical role in biogenesis of 30S subunits.</text>
</comment>
<comment type="subcellular location">
    <subcellularLocation>
        <location evidence="1">Cytoplasm</location>
    </subcellularLocation>
</comment>
<comment type="similarity">
    <text evidence="1">Belongs to the class I-like SAM-binding methyltransferase superfamily. rRNA adenine N(6)-methyltransferase family. RsmA subfamily.</text>
</comment>
<protein>
    <recommendedName>
        <fullName evidence="1">Probable ribosomal RNA small subunit methyltransferase A</fullName>
        <ecNumber evidence="1">2.1.1.-</ecNumber>
    </recommendedName>
    <alternativeName>
        <fullName evidence="1">16S rRNA dimethyladenosine transferase</fullName>
    </alternativeName>
    <alternativeName>
        <fullName evidence="1">16S rRNA dimethylase</fullName>
    </alternativeName>
    <alternativeName>
        <fullName evidence="1">S-adenosylmethionine-6-N',N'-adenosyl(rRNA) dimethyltransferase</fullName>
    </alternativeName>
</protein>
<accession>Q466S6</accession>
<gene>
    <name evidence="1" type="primary">rsmA</name>
    <name evidence="1" type="synonym">ksgA</name>
    <name type="ordered locus">Mbar_A3234</name>
</gene>
<feature type="chain" id="PRO_0000257380" description="Probable ribosomal RNA small subunit methyltransferase A">
    <location>
        <begin position="1"/>
        <end position="287"/>
    </location>
</feature>
<feature type="binding site" evidence="1">
    <location>
        <position position="29"/>
    </location>
    <ligand>
        <name>S-adenosyl-L-methionine</name>
        <dbReference type="ChEBI" id="CHEBI:59789"/>
    </ligand>
</feature>
<feature type="binding site" evidence="1">
    <location>
        <position position="31"/>
    </location>
    <ligand>
        <name>S-adenosyl-L-methionine</name>
        <dbReference type="ChEBI" id="CHEBI:59789"/>
    </ligand>
</feature>
<feature type="binding site" evidence="1">
    <location>
        <position position="56"/>
    </location>
    <ligand>
        <name>S-adenosyl-L-methionine</name>
        <dbReference type="ChEBI" id="CHEBI:59789"/>
    </ligand>
</feature>
<feature type="binding site" evidence="1">
    <location>
        <position position="77"/>
    </location>
    <ligand>
        <name>S-adenosyl-L-methionine</name>
        <dbReference type="ChEBI" id="CHEBI:59789"/>
    </ligand>
</feature>
<feature type="binding site" evidence="1">
    <location>
        <position position="102"/>
    </location>
    <ligand>
        <name>S-adenosyl-L-methionine</name>
        <dbReference type="ChEBI" id="CHEBI:59789"/>
    </ligand>
</feature>
<feature type="binding site" evidence="1">
    <location>
        <position position="117"/>
    </location>
    <ligand>
        <name>S-adenosyl-L-methionine</name>
        <dbReference type="ChEBI" id="CHEBI:59789"/>
    </ligand>
</feature>
<dbReference type="EC" id="2.1.1.-" evidence="1"/>
<dbReference type="EMBL" id="CP000099">
    <property type="protein sequence ID" value="AAZ72116.1"/>
    <property type="molecule type" value="Genomic_DNA"/>
</dbReference>
<dbReference type="SMR" id="Q466S6"/>
<dbReference type="STRING" id="269797.Mbar_A3234"/>
<dbReference type="PaxDb" id="269797-Mbar_A3234"/>
<dbReference type="KEGG" id="mba:Mbar_A3234"/>
<dbReference type="eggNOG" id="arCOG04131">
    <property type="taxonomic scope" value="Archaea"/>
</dbReference>
<dbReference type="HOGENOM" id="CLU_041220_0_2_2"/>
<dbReference type="GO" id="GO:0005737">
    <property type="term" value="C:cytoplasm"/>
    <property type="evidence" value="ECO:0007669"/>
    <property type="project" value="UniProtKB-SubCell"/>
</dbReference>
<dbReference type="GO" id="GO:0003723">
    <property type="term" value="F:RNA binding"/>
    <property type="evidence" value="ECO:0007669"/>
    <property type="project" value="UniProtKB-KW"/>
</dbReference>
<dbReference type="GO" id="GO:0000179">
    <property type="term" value="F:rRNA (adenine-N6,N6-)-dimethyltransferase activity"/>
    <property type="evidence" value="ECO:0007669"/>
    <property type="project" value="InterPro"/>
</dbReference>
<dbReference type="CDD" id="cd02440">
    <property type="entry name" value="AdoMet_MTases"/>
    <property type="match status" value="1"/>
</dbReference>
<dbReference type="FunFam" id="3.40.50.150:FF:000023">
    <property type="entry name" value="Ribosomal RNA small subunit methyltransferase A"/>
    <property type="match status" value="1"/>
</dbReference>
<dbReference type="Gene3D" id="1.10.8.100">
    <property type="entry name" value="Ribosomal RNA adenine dimethylase-like, domain 2"/>
    <property type="match status" value="1"/>
</dbReference>
<dbReference type="Gene3D" id="3.40.50.150">
    <property type="entry name" value="Vaccinia Virus protein VP39"/>
    <property type="match status" value="1"/>
</dbReference>
<dbReference type="HAMAP" id="MF_00607">
    <property type="entry name" value="16SrRNA_methyltr_A"/>
    <property type="match status" value="1"/>
</dbReference>
<dbReference type="InterPro" id="IPR001737">
    <property type="entry name" value="KsgA/Erm"/>
</dbReference>
<dbReference type="InterPro" id="IPR023165">
    <property type="entry name" value="rRNA_Ade_diMease-like_C"/>
</dbReference>
<dbReference type="InterPro" id="IPR020596">
    <property type="entry name" value="rRNA_Ade_Mease_Trfase_CS"/>
</dbReference>
<dbReference type="InterPro" id="IPR020598">
    <property type="entry name" value="rRNA_Ade_methylase_Trfase_N"/>
</dbReference>
<dbReference type="InterPro" id="IPR011530">
    <property type="entry name" value="rRNA_adenine_dimethylase"/>
</dbReference>
<dbReference type="InterPro" id="IPR029063">
    <property type="entry name" value="SAM-dependent_MTases_sf"/>
</dbReference>
<dbReference type="NCBIfam" id="TIGR00755">
    <property type="entry name" value="ksgA"/>
    <property type="match status" value="1"/>
</dbReference>
<dbReference type="PANTHER" id="PTHR11727">
    <property type="entry name" value="DIMETHYLADENOSINE TRANSFERASE"/>
    <property type="match status" value="1"/>
</dbReference>
<dbReference type="PANTHER" id="PTHR11727:SF7">
    <property type="entry name" value="DIMETHYLADENOSINE TRANSFERASE-RELATED"/>
    <property type="match status" value="1"/>
</dbReference>
<dbReference type="Pfam" id="PF00398">
    <property type="entry name" value="RrnaAD"/>
    <property type="match status" value="1"/>
</dbReference>
<dbReference type="SMART" id="SM00650">
    <property type="entry name" value="rADc"/>
    <property type="match status" value="1"/>
</dbReference>
<dbReference type="SUPFAM" id="SSF53335">
    <property type="entry name" value="S-adenosyl-L-methionine-dependent methyltransferases"/>
    <property type="match status" value="1"/>
</dbReference>
<dbReference type="PROSITE" id="PS01131">
    <property type="entry name" value="RRNA_A_DIMETH"/>
    <property type="match status" value="1"/>
</dbReference>
<dbReference type="PROSITE" id="PS51689">
    <property type="entry name" value="SAM_RNA_A_N6_MT"/>
    <property type="match status" value="1"/>
</dbReference>
<name>RSMA_METBF</name>
<keyword id="KW-0963">Cytoplasm</keyword>
<keyword id="KW-0489">Methyltransferase</keyword>
<keyword id="KW-0694">RNA-binding</keyword>
<keyword id="KW-0698">rRNA processing</keyword>
<keyword id="KW-0949">S-adenosyl-L-methionine</keyword>
<keyword id="KW-0808">Transferase</keyword>
<organism>
    <name type="scientific">Methanosarcina barkeri (strain Fusaro / DSM 804)</name>
    <dbReference type="NCBI Taxonomy" id="269797"/>
    <lineage>
        <taxon>Archaea</taxon>
        <taxon>Methanobacteriati</taxon>
        <taxon>Methanobacteriota</taxon>
        <taxon>Stenosarchaea group</taxon>
        <taxon>Methanomicrobia</taxon>
        <taxon>Methanosarcinales</taxon>
        <taxon>Methanosarcinaceae</taxon>
        <taxon>Methanosarcina</taxon>
    </lineage>
</organism>
<proteinExistence type="inferred from homology"/>